<organism>
    <name type="scientific">Escherichia coli O6:H1 (strain CFT073 / ATCC 700928 / UPEC)</name>
    <dbReference type="NCBI Taxonomy" id="199310"/>
    <lineage>
        <taxon>Bacteria</taxon>
        <taxon>Pseudomonadati</taxon>
        <taxon>Pseudomonadota</taxon>
        <taxon>Gammaproteobacteria</taxon>
        <taxon>Enterobacterales</taxon>
        <taxon>Enterobacteriaceae</taxon>
        <taxon>Escherichia</taxon>
    </lineage>
</organism>
<gene>
    <name type="primary">cmk</name>
    <name type="synonym">mssA</name>
    <name type="ordered locus">c1048</name>
</gene>
<feature type="chain" id="PRO_0000131914" description="Cytidylate kinase">
    <location>
        <begin position="1"/>
        <end position="227"/>
    </location>
</feature>
<feature type="binding site" evidence="1">
    <location>
        <begin position="12"/>
        <end position="20"/>
    </location>
    <ligand>
        <name>ATP</name>
        <dbReference type="ChEBI" id="CHEBI:30616"/>
    </ligand>
</feature>
<keyword id="KW-0067">ATP-binding</keyword>
<keyword id="KW-0963">Cytoplasm</keyword>
<keyword id="KW-0418">Kinase</keyword>
<keyword id="KW-0547">Nucleotide-binding</keyword>
<keyword id="KW-1185">Reference proteome</keyword>
<keyword id="KW-0808">Transferase</keyword>
<accession>P0A6I1</accession>
<accession>P03823</accession>
<accession>P23863</accession>
<accession>P78263</accession>
<protein>
    <recommendedName>
        <fullName>Cytidylate kinase</fullName>
        <shortName>CK</shortName>
        <ecNumber>2.7.4.25</ecNumber>
    </recommendedName>
    <alternativeName>
        <fullName>Cytidine monophosphate kinase</fullName>
        <shortName>CMP kinase</shortName>
    </alternativeName>
</protein>
<sequence length="227" mass="24746">MTAIAPVITIDGPSGAGKGTLCKAMAEALQWHLLDSGAIYRVLALAALHHHVDVASEDALVPLASHLDVRFVSTNGNLEVILEGEDVSGEIRTQEVANAASQVAAFPRVREALLRRQRAFRELPGLIADGRDMGTVVFPDAPVKIFLDASSEERAHRRMLQLQEKGFSVNFERLLAEIKERDDRDRNRAVAPLVPAADALVLDSTTLSIEQVIEKALQYARQKLALA</sequence>
<evidence type="ECO:0000250" key="1"/>
<evidence type="ECO:0000305" key="2"/>
<proteinExistence type="inferred from homology"/>
<name>KCY_ECOL6</name>
<comment type="catalytic activity">
    <reaction>
        <text>CMP + ATP = CDP + ADP</text>
        <dbReference type="Rhea" id="RHEA:11600"/>
        <dbReference type="ChEBI" id="CHEBI:30616"/>
        <dbReference type="ChEBI" id="CHEBI:58069"/>
        <dbReference type="ChEBI" id="CHEBI:60377"/>
        <dbReference type="ChEBI" id="CHEBI:456216"/>
        <dbReference type="EC" id="2.7.4.25"/>
    </reaction>
</comment>
<comment type="catalytic activity">
    <reaction>
        <text>dCMP + ATP = dCDP + ADP</text>
        <dbReference type="Rhea" id="RHEA:25094"/>
        <dbReference type="ChEBI" id="CHEBI:30616"/>
        <dbReference type="ChEBI" id="CHEBI:57566"/>
        <dbReference type="ChEBI" id="CHEBI:58593"/>
        <dbReference type="ChEBI" id="CHEBI:456216"/>
        <dbReference type="EC" id="2.7.4.25"/>
    </reaction>
</comment>
<comment type="subcellular location">
    <subcellularLocation>
        <location evidence="1">Cytoplasm</location>
    </subcellularLocation>
</comment>
<comment type="similarity">
    <text evidence="2">Belongs to the cytidylate kinase family. Type 1 subfamily.</text>
</comment>
<reference key="1">
    <citation type="journal article" date="2002" name="Proc. Natl. Acad. Sci. U.S.A.">
        <title>Extensive mosaic structure revealed by the complete genome sequence of uropathogenic Escherichia coli.</title>
        <authorList>
            <person name="Welch R.A."/>
            <person name="Burland V."/>
            <person name="Plunkett G. III"/>
            <person name="Redford P."/>
            <person name="Roesch P."/>
            <person name="Rasko D."/>
            <person name="Buckles E.L."/>
            <person name="Liou S.-R."/>
            <person name="Boutin A."/>
            <person name="Hackett J."/>
            <person name="Stroud D."/>
            <person name="Mayhew G.F."/>
            <person name="Rose D.J."/>
            <person name="Zhou S."/>
            <person name="Schwartz D.C."/>
            <person name="Perna N.T."/>
            <person name="Mobley H.L.T."/>
            <person name="Donnenberg M.S."/>
            <person name="Blattner F.R."/>
        </authorList>
    </citation>
    <scope>NUCLEOTIDE SEQUENCE [LARGE SCALE GENOMIC DNA]</scope>
    <source>
        <strain>CFT073 / ATCC 700928 / UPEC</strain>
    </source>
</reference>
<dbReference type="EC" id="2.7.4.25"/>
<dbReference type="EMBL" id="AE014075">
    <property type="protein sequence ID" value="AAN79518.1"/>
    <property type="molecule type" value="Genomic_DNA"/>
</dbReference>
<dbReference type="RefSeq" id="WP_000125016.1">
    <property type="nucleotide sequence ID" value="NZ_CP051263.1"/>
</dbReference>
<dbReference type="SMR" id="P0A6I1"/>
<dbReference type="STRING" id="199310.c1048"/>
<dbReference type="GeneID" id="93776507"/>
<dbReference type="KEGG" id="ecc:c1048"/>
<dbReference type="eggNOG" id="COG0283">
    <property type="taxonomic scope" value="Bacteria"/>
</dbReference>
<dbReference type="HOGENOM" id="CLU_079959_0_2_6"/>
<dbReference type="BioCyc" id="ECOL199310:C1048-MONOMER"/>
<dbReference type="Proteomes" id="UP000001410">
    <property type="component" value="Chromosome"/>
</dbReference>
<dbReference type="GO" id="GO:0005829">
    <property type="term" value="C:cytosol"/>
    <property type="evidence" value="ECO:0007669"/>
    <property type="project" value="TreeGrafter"/>
</dbReference>
<dbReference type="GO" id="GO:0005524">
    <property type="term" value="F:ATP binding"/>
    <property type="evidence" value="ECO:0007669"/>
    <property type="project" value="UniProtKB-UniRule"/>
</dbReference>
<dbReference type="GO" id="GO:0036430">
    <property type="term" value="F:CMP kinase activity"/>
    <property type="evidence" value="ECO:0007669"/>
    <property type="project" value="RHEA"/>
</dbReference>
<dbReference type="GO" id="GO:0036431">
    <property type="term" value="F:dCMP kinase activity"/>
    <property type="evidence" value="ECO:0007669"/>
    <property type="project" value="RHEA"/>
</dbReference>
<dbReference type="GO" id="GO:0015949">
    <property type="term" value="P:nucleobase-containing small molecule interconversion"/>
    <property type="evidence" value="ECO:0007669"/>
    <property type="project" value="TreeGrafter"/>
</dbReference>
<dbReference type="GO" id="GO:0006220">
    <property type="term" value="P:pyrimidine nucleotide metabolic process"/>
    <property type="evidence" value="ECO:0007669"/>
    <property type="project" value="UniProtKB-UniRule"/>
</dbReference>
<dbReference type="CDD" id="cd02020">
    <property type="entry name" value="CMPK"/>
    <property type="match status" value="1"/>
</dbReference>
<dbReference type="FunFam" id="3.40.50.300:FF:000262">
    <property type="entry name" value="Cytidylate kinase"/>
    <property type="match status" value="1"/>
</dbReference>
<dbReference type="Gene3D" id="3.40.50.300">
    <property type="entry name" value="P-loop containing nucleotide triphosphate hydrolases"/>
    <property type="match status" value="1"/>
</dbReference>
<dbReference type="HAMAP" id="MF_00238">
    <property type="entry name" value="Cytidyl_kinase_type1"/>
    <property type="match status" value="1"/>
</dbReference>
<dbReference type="InterPro" id="IPR003136">
    <property type="entry name" value="Cytidylate_kin"/>
</dbReference>
<dbReference type="InterPro" id="IPR011994">
    <property type="entry name" value="Cytidylate_kinase_dom"/>
</dbReference>
<dbReference type="InterPro" id="IPR027417">
    <property type="entry name" value="P-loop_NTPase"/>
</dbReference>
<dbReference type="NCBIfam" id="TIGR00017">
    <property type="entry name" value="cmk"/>
    <property type="match status" value="1"/>
</dbReference>
<dbReference type="PANTHER" id="PTHR21299:SF2">
    <property type="entry name" value="CYTIDYLATE KINASE"/>
    <property type="match status" value="1"/>
</dbReference>
<dbReference type="PANTHER" id="PTHR21299">
    <property type="entry name" value="CYTIDYLATE KINASE/PANTOATE-BETA-ALANINE LIGASE"/>
    <property type="match status" value="1"/>
</dbReference>
<dbReference type="Pfam" id="PF02224">
    <property type="entry name" value="Cytidylate_kin"/>
    <property type="match status" value="1"/>
</dbReference>
<dbReference type="SUPFAM" id="SSF52540">
    <property type="entry name" value="P-loop containing nucleoside triphosphate hydrolases"/>
    <property type="match status" value="1"/>
</dbReference>